<gene>
    <name type="primary">RAB1C</name>
</gene>
<sequence length="201" mass="22017">MNPGYDCLFKLLLIGDSGVGKSCLLLRFADDPYTESYISTIGVDFKIQTIELDGKTIKLQIWDTAGQERFWTITSSYYRGAHGFLVVYDVTDQESYANVKQWLQEIDRHASENVNKLLVGNKSDLTTKKVVDNTTAKEFADSLGIPFLETSAKNATNVEQAFMTMAAEIKKQMGPGAASGGERPNLKIDSTPVKPAGGGCC</sequence>
<reference key="1">
    <citation type="journal article" date="2004" name="Nature">
        <title>DNA sequence and analysis of human chromosome 9.</title>
        <authorList>
            <person name="Humphray S.J."/>
            <person name="Oliver K."/>
            <person name="Hunt A.R."/>
            <person name="Plumb R.W."/>
            <person name="Loveland J.E."/>
            <person name="Howe K.L."/>
            <person name="Andrews T.D."/>
            <person name="Searle S."/>
            <person name="Hunt S.E."/>
            <person name="Scott C.E."/>
            <person name="Jones M.C."/>
            <person name="Ainscough R."/>
            <person name="Almeida J.P."/>
            <person name="Ambrose K.D."/>
            <person name="Ashwell R.I.S."/>
            <person name="Babbage A.K."/>
            <person name="Babbage S."/>
            <person name="Bagguley C.L."/>
            <person name="Bailey J."/>
            <person name="Banerjee R."/>
            <person name="Barker D.J."/>
            <person name="Barlow K.F."/>
            <person name="Bates K."/>
            <person name="Beasley H."/>
            <person name="Beasley O."/>
            <person name="Bird C.P."/>
            <person name="Bray-Allen S."/>
            <person name="Brown A.J."/>
            <person name="Brown J.Y."/>
            <person name="Burford D."/>
            <person name="Burrill W."/>
            <person name="Burton J."/>
            <person name="Carder C."/>
            <person name="Carter N.P."/>
            <person name="Chapman J.C."/>
            <person name="Chen Y."/>
            <person name="Clarke G."/>
            <person name="Clark S.Y."/>
            <person name="Clee C.M."/>
            <person name="Clegg S."/>
            <person name="Collier R.E."/>
            <person name="Corby N."/>
            <person name="Crosier M."/>
            <person name="Cummings A.T."/>
            <person name="Davies J."/>
            <person name="Dhami P."/>
            <person name="Dunn M."/>
            <person name="Dutta I."/>
            <person name="Dyer L.W."/>
            <person name="Earthrowl M.E."/>
            <person name="Faulkner L."/>
            <person name="Fleming C.J."/>
            <person name="Frankish A."/>
            <person name="Frankland J.A."/>
            <person name="French L."/>
            <person name="Fricker D.G."/>
            <person name="Garner P."/>
            <person name="Garnett J."/>
            <person name="Ghori J."/>
            <person name="Gilbert J.G.R."/>
            <person name="Glison C."/>
            <person name="Grafham D.V."/>
            <person name="Gribble S."/>
            <person name="Griffiths C."/>
            <person name="Griffiths-Jones S."/>
            <person name="Grocock R."/>
            <person name="Guy J."/>
            <person name="Hall R.E."/>
            <person name="Hammond S."/>
            <person name="Harley J.L."/>
            <person name="Harrison E.S.I."/>
            <person name="Hart E.A."/>
            <person name="Heath P.D."/>
            <person name="Henderson C.D."/>
            <person name="Hopkins B.L."/>
            <person name="Howard P.J."/>
            <person name="Howden P.J."/>
            <person name="Huckle E."/>
            <person name="Johnson C."/>
            <person name="Johnson D."/>
            <person name="Joy A.A."/>
            <person name="Kay M."/>
            <person name="Keenan S."/>
            <person name="Kershaw J.K."/>
            <person name="Kimberley A.M."/>
            <person name="King A."/>
            <person name="Knights A."/>
            <person name="Laird G.K."/>
            <person name="Langford C."/>
            <person name="Lawlor S."/>
            <person name="Leongamornlert D.A."/>
            <person name="Leversha M."/>
            <person name="Lloyd C."/>
            <person name="Lloyd D.M."/>
            <person name="Lovell J."/>
            <person name="Martin S."/>
            <person name="Mashreghi-Mohammadi M."/>
            <person name="Matthews L."/>
            <person name="McLaren S."/>
            <person name="McLay K.E."/>
            <person name="McMurray A."/>
            <person name="Milne S."/>
            <person name="Nickerson T."/>
            <person name="Nisbett J."/>
            <person name="Nordsiek G."/>
            <person name="Pearce A.V."/>
            <person name="Peck A.I."/>
            <person name="Porter K.M."/>
            <person name="Pandian R."/>
            <person name="Pelan S."/>
            <person name="Phillimore B."/>
            <person name="Povey S."/>
            <person name="Ramsey Y."/>
            <person name="Rand V."/>
            <person name="Scharfe M."/>
            <person name="Sehra H.K."/>
            <person name="Shownkeen R."/>
            <person name="Sims S.K."/>
            <person name="Skuce C.D."/>
            <person name="Smith M."/>
            <person name="Steward C.A."/>
            <person name="Swarbreck D."/>
            <person name="Sycamore N."/>
            <person name="Tester J."/>
            <person name="Thorpe A."/>
            <person name="Tracey A."/>
            <person name="Tromans A."/>
            <person name="Thomas D.W."/>
            <person name="Wall M."/>
            <person name="Wallis J.M."/>
            <person name="West A.P."/>
            <person name="Whitehead S.L."/>
            <person name="Willey D.L."/>
            <person name="Williams S.A."/>
            <person name="Wilming L."/>
            <person name="Wray P.W."/>
            <person name="Young L."/>
            <person name="Ashurst J.L."/>
            <person name="Coulson A."/>
            <person name="Blocker H."/>
            <person name="Durbin R.M."/>
            <person name="Sulston J.E."/>
            <person name="Hubbard T."/>
            <person name="Jackson M.J."/>
            <person name="Bentley D.R."/>
            <person name="Beck S."/>
            <person name="Rogers J."/>
            <person name="Dunham I."/>
        </authorList>
    </citation>
    <scope>NUCLEOTIDE SEQUENCE [LARGE SCALE GENOMIC DNA]</scope>
</reference>
<reference key="2">
    <citation type="journal article" date="1997" name="Biochim. Biophys. Acta">
        <title>RAB GTPases expressed in human melanoma cells.</title>
        <authorList>
            <person name="Chen D."/>
            <person name="Guo J."/>
            <person name="Gahl W.A."/>
        </authorList>
    </citation>
    <scope>NUCLEOTIDE SEQUENCE [MRNA] OF 67-119</scope>
    <source>
        <tissue>Melanoma</tissue>
    </source>
</reference>
<reference key="3">
    <citation type="journal article" date="2011" name="Nature">
        <title>Modulation of Rab GTPase function by a protein phosphocholine transferase.</title>
        <authorList>
            <person name="Mukherjee S."/>
            <person name="Liu X."/>
            <person name="Arasaki K."/>
            <person name="McDonough J."/>
            <person name="Galan J.E."/>
            <person name="Roy C.R."/>
        </authorList>
    </citation>
    <scope>INTERACTION WITH L.PNEUMOPHILA ANKX (MICROBIAL INFECTION)</scope>
    <scope>PHOSPHORYLATION AT SER-76 (MICROBIAL INFECTION)</scope>
</reference>
<reference key="4">
    <citation type="journal article" date="2011" name="Proc. Natl. Acad. Sci. U.S.A.">
        <title>Legionella pneumophila regulates the small GTPase Rab1 activity by reversible phosphorylcholination.</title>
        <authorList>
            <person name="Tan Y."/>
            <person name="Arnold R.J."/>
            <person name="Luo Z.Q."/>
        </authorList>
    </citation>
    <scope>INTERACTION WITH L.PNEUMOPHILA LEM3 (MICROBIAL INFECTION)</scope>
    <scope>PHOSPHORYLATION AT SER-76 (MICROBIAL INFECTION)</scope>
</reference>
<reference key="5">
    <citation type="journal article" date="2020" name="Front. Cell. Infect. Microbiol.">
        <title>The Salmonella effector SseK3 targets small Rab GTPases.</title>
        <authorList>
            <person name="Gan J."/>
            <person name="Scott N.E."/>
            <person name="Newson J.P.M."/>
            <person name="Wibawa R.R."/>
            <person name="Wong Fok Lung T."/>
            <person name="Pollock G.L."/>
            <person name="Ng G.Z."/>
            <person name="van Driel I."/>
            <person name="Pearson J.S."/>
            <person name="Hartland E.L."/>
            <person name="Giogha C."/>
        </authorList>
    </citation>
    <scope>GLYCOSYLATION (MICROBIAL INFECTION)</scope>
</reference>
<dbReference type="EC" id="3.6.5.2" evidence="1"/>
<dbReference type="EMBL" id="AL513165">
    <property type="status" value="NOT_ANNOTATED_CDS"/>
    <property type="molecule type" value="Genomic_DNA"/>
</dbReference>
<dbReference type="EMBL" id="U66622">
    <property type="protein sequence ID" value="AAC51197.1"/>
    <property type="molecule type" value="mRNA"/>
</dbReference>
<dbReference type="SMR" id="Q92928"/>
<dbReference type="FunCoup" id="Q92928">
    <property type="interactions" value="1042"/>
</dbReference>
<dbReference type="IntAct" id="Q92928">
    <property type="interactions" value="17"/>
</dbReference>
<dbReference type="MINT" id="Q92928"/>
<dbReference type="GlyGen" id="Q92928">
    <property type="glycosylation" value="1 site, 1 O-linked glycan (1 site)"/>
</dbReference>
<dbReference type="iPTMnet" id="Q92928"/>
<dbReference type="MetOSite" id="Q92928"/>
<dbReference type="PhosphoSitePlus" id="Q92928"/>
<dbReference type="SwissPalm" id="Q92928"/>
<dbReference type="BioMuta" id="HGNC:23683"/>
<dbReference type="jPOST" id="Q92928"/>
<dbReference type="MassIVE" id="Q92928"/>
<dbReference type="ProteomicsDB" id="75609"/>
<dbReference type="Pumba" id="Q92928"/>
<dbReference type="AGR" id="HGNC:23683"/>
<dbReference type="GeneCards" id="RAB1C"/>
<dbReference type="HGNC" id="HGNC:23683">
    <property type="gene designation" value="RAB1C"/>
</dbReference>
<dbReference type="neXtProt" id="NX_Q92928"/>
<dbReference type="InParanoid" id="Q92928"/>
<dbReference type="PAN-GO" id="Q92928">
    <property type="GO annotations" value="4 GO annotations based on evolutionary models"/>
</dbReference>
<dbReference type="PhylomeDB" id="Q92928"/>
<dbReference type="PathwayCommons" id="Q92928"/>
<dbReference type="SignaLink" id="Q92928"/>
<dbReference type="Pharos" id="Q92928">
    <property type="development level" value="Tdark"/>
</dbReference>
<dbReference type="Proteomes" id="UP000005640">
    <property type="component" value="Unplaced"/>
</dbReference>
<dbReference type="RNAct" id="Q92928">
    <property type="molecule type" value="protein"/>
</dbReference>
<dbReference type="GO" id="GO:0005737">
    <property type="term" value="C:cytoplasm"/>
    <property type="evidence" value="ECO:0007669"/>
    <property type="project" value="UniProtKB-SubCell"/>
</dbReference>
<dbReference type="GO" id="GO:0012505">
    <property type="term" value="C:endomembrane system"/>
    <property type="evidence" value="ECO:0000318"/>
    <property type="project" value="GO_Central"/>
</dbReference>
<dbReference type="GO" id="GO:0016020">
    <property type="term" value="C:membrane"/>
    <property type="evidence" value="ECO:0007669"/>
    <property type="project" value="UniProtKB-SubCell"/>
</dbReference>
<dbReference type="GO" id="GO:0003925">
    <property type="term" value="F:G protein activity"/>
    <property type="evidence" value="ECO:0007669"/>
    <property type="project" value="UniProtKB-EC"/>
</dbReference>
<dbReference type="GO" id="GO:0005525">
    <property type="term" value="F:GTP binding"/>
    <property type="evidence" value="ECO:0007669"/>
    <property type="project" value="UniProtKB-KW"/>
</dbReference>
<dbReference type="GO" id="GO:0003924">
    <property type="term" value="F:GTPase activity"/>
    <property type="evidence" value="ECO:0000318"/>
    <property type="project" value="GO_Central"/>
</dbReference>
<dbReference type="GO" id="GO:0000045">
    <property type="term" value="P:autophagosome assembly"/>
    <property type="evidence" value="ECO:0000318"/>
    <property type="project" value="GO_Central"/>
</dbReference>
<dbReference type="GO" id="GO:0006886">
    <property type="term" value="P:intracellular protein transport"/>
    <property type="evidence" value="ECO:0000318"/>
    <property type="project" value="GO_Central"/>
</dbReference>
<dbReference type="CDD" id="cd01869">
    <property type="entry name" value="Rab1_Ypt1"/>
    <property type="match status" value="1"/>
</dbReference>
<dbReference type="FunFam" id="3.40.50.300:FF:000069">
    <property type="entry name" value="Ras GTP-binding protein YPT1"/>
    <property type="match status" value="1"/>
</dbReference>
<dbReference type="Gene3D" id="3.40.50.300">
    <property type="entry name" value="P-loop containing nucleotide triphosphate hydrolases"/>
    <property type="match status" value="1"/>
</dbReference>
<dbReference type="InterPro" id="IPR027417">
    <property type="entry name" value="P-loop_NTPase"/>
</dbReference>
<dbReference type="InterPro" id="IPR050227">
    <property type="entry name" value="Rab"/>
</dbReference>
<dbReference type="InterPro" id="IPR005225">
    <property type="entry name" value="Small_GTP-bd"/>
</dbReference>
<dbReference type="InterPro" id="IPR001806">
    <property type="entry name" value="Small_GTPase"/>
</dbReference>
<dbReference type="NCBIfam" id="TIGR00231">
    <property type="entry name" value="small_GTP"/>
    <property type="match status" value="1"/>
</dbReference>
<dbReference type="PANTHER" id="PTHR47977">
    <property type="entry name" value="RAS-RELATED PROTEIN RAB"/>
    <property type="match status" value="1"/>
</dbReference>
<dbReference type="Pfam" id="PF00071">
    <property type="entry name" value="Ras"/>
    <property type="match status" value="1"/>
</dbReference>
<dbReference type="PRINTS" id="PR00449">
    <property type="entry name" value="RASTRNSFRMNG"/>
</dbReference>
<dbReference type="SMART" id="SM00175">
    <property type="entry name" value="RAB"/>
    <property type="match status" value="1"/>
</dbReference>
<dbReference type="SMART" id="SM00176">
    <property type="entry name" value="RAN"/>
    <property type="match status" value="1"/>
</dbReference>
<dbReference type="SMART" id="SM00173">
    <property type="entry name" value="RAS"/>
    <property type="match status" value="1"/>
</dbReference>
<dbReference type="SMART" id="SM00174">
    <property type="entry name" value="RHO"/>
    <property type="match status" value="1"/>
</dbReference>
<dbReference type="SUPFAM" id="SSF52540">
    <property type="entry name" value="P-loop containing nucleoside triphosphate hydrolases"/>
    <property type="match status" value="1"/>
</dbReference>
<dbReference type="PROSITE" id="PS51419">
    <property type="entry name" value="RAB"/>
    <property type="match status" value="1"/>
</dbReference>
<comment type="function">
    <text evidence="1">Protein transport. Probably involved in vesicular traffic (By similarity).</text>
</comment>
<comment type="catalytic activity">
    <reaction evidence="1">
        <text>GTP + H2O = GDP + phosphate + H(+)</text>
        <dbReference type="Rhea" id="RHEA:19669"/>
        <dbReference type="ChEBI" id="CHEBI:15377"/>
        <dbReference type="ChEBI" id="CHEBI:15378"/>
        <dbReference type="ChEBI" id="CHEBI:37565"/>
        <dbReference type="ChEBI" id="CHEBI:43474"/>
        <dbReference type="ChEBI" id="CHEBI:58189"/>
        <dbReference type="EC" id="3.6.5.2"/>
    </reaction>
</comment>
<comment type="subcellular location">
    <subcellularLocation>
        <location>Membrane</location>
        <topology>Lipid-anchor</topology>
        <orientation evidence="1">Cytoplasmic side</orientation>
    </subcellularLocation>
    <subcellularLocation>
        <location evidence="1">Cytoplasm</location>
    </subcellularLocation>
</comment>
<comment type="PTM">
    <text evidence="4 5">(Microbial infection) Phosphocholinated at Ser-76 by L.pneumophila AnkX, leading to displace GDP dissociation inhibitors (GDI) (PubMed:21822290). Both GDP-bound and GTP-bound forms can be phosphocholinated. Dephosphocholinated by L.pneumophila Lem3, restoring accessibility to L.pneumophila GTPase effector LepB (PubMed:22158903).</text>
</comment>
<comment type="PTM">
    <text evidence="6">(Microbial infection) Glycosylated by S.typhimurium protein Ssek3: arginine GlcNAcylation prevents GTPase activity, thereby disrupting vesicular protein transport from the endoplasmic reticulum (ER) to the Golgi compartment.</text>
</comment>
<comment type="similarity">
    <text evidence="7">Belongs to the small GTPase superfamily. Rab family.</text>
</comment>
<comment type="caution">
    <text evidence="7">Could be the product of a pseudogene.</text>
</comment>
<evidence type="ECO:0000250" key="1">
    <source>
        <dbReference type="UniProtKB" id="P62820"/>
    </source>
</evidence>
<evidence type="ECO:0000255" key="2"/>
<evidence type="ECO:0000256" key="3">
    <source>
        <dbReference type="SAM" id="MobiDB-lite"/>
    </source>
</evidence>
<evidence type="ECO:0000269" key="4">
    <source>
    </source>
</evidence>
<evidence type="ECO:0000269" key="5">
    <source>
    </source>
</evidence>
<evidence type="ECO:0000269" key="6">
    <source>
    </source>
</evidence>
<evidence type="ECO:0000305" key="7"/>
<proteinExistence type="uncertain"/>
<accession>Q92928</accession>
<keyword id="KW-0963">Cytoplasm</keyword>
<keyword id="KW-0325">Glycoprotein</keyword>
<keyword id="KW-0342">GTP-binding</keyword>
<keyword id="KW-0378">Hydrolase</keyword>
<keyword id="KW-0449">Lipoprotein</keyword>
<keyword id="KW-0472">Membrane</keyword>
<keyword id="KW-0547">Nucleotide-binding</keyword>
<keyword id="KW-0597">Phosphoprotein</keyword>
<keyword id="KW-0636">Prenylation</keyword>
<keyword id="KW-0653">Protein transport</keyword>
<keyword id="KW-1267">Proteomics identification</keyword>
<keyword id="KW-1185">Reference proteome</keyword>
<keyword id="KW-0813">Transport</keyword>
<feature type="chain" id="PRO_0000343568" description="Putative Ras-related protein Rab-1C">
    <location>
        <begin position="1"/>
        <end position="201"/>
    </location>
</feature>
<feature type="region of interest" description="Disordered" evidence="3">
    <location>
        <begin position="174"/>
        <end position="201"/>
    </location>
</feature>
<feature type="short sequence motif" description="Effector region" evidence="2">
    <location>
        <begin position="37"/>
        <end position="45"/>
    </location>
</feature>
<feature type="binding site" evidence="1">
    <location>
        <begin position="15"/>
        <end position="23"/>
    </location>
    <ligand>
        <name>GTP</name>
        <dbReference type="ChEBI" id="CHEBI:37565"/>
    </ligand>
</feature>
<feature type="binding site" evidence="1">
    <location>
        <begin position="33"/>
        <end position="40"/>
    </location>
    <ligand>
        <name>GTP</name>
        <dbReference type="ChEBI" id="CHEBI:37565"/>
    </ligand>
</feature>
<feature type="binding site" evidence="1">
    <location>
        <begin position="63"/>
        <end position="67"/>
    </location>
    <ligand>
        <name>GTP</name>
        <dbReference type="ChEBI" id="CHEBI:37565"/>
    </ligand>
</feature>
<feature type="binding site" evidence="1">
    <location>
        <begin position="121"/>
        <end position="124"/>
    </location>
    <ligand>
        <name>GTP</name>
        <dbReference type="ChEBI" id="CHEBI:37565"/>
    </ligand>
</feature>
<feature type="binding site" evidence="1">
    <location>
        <begin position="151"/>
        <end position="153"/>
    </location>
    <ligand>
        <name>GTP</name>
        <dbReference type="ChEBI" id="CHEBI:37565"/>
    </ligand>
</feature>
<feature type="modified residue" description="(Microbial infection) O-(2-cholinephosphoryl)serine" evidence="4 5">
    <location>
        <position position="76"/>
    </location>
</feature>
<feature type="lipid moiety-binding region" description="S-geranylgeranyl cysteine" evidence="1">
    <location>
        <position position="200"/>
    </location>
</feature>
<feature type="lipid moiety-binding region" description="S-geranylgeranyl cysteine" evidence="1">
    <location>
        <position position="201"/>
    </location>
</feature>
<organism>
    <name type="scientific">Homo sapiens</name>
    <name type="common">Human</name>
    <dbReference type="NCBI Taxonomy" id="9606"/>
    <lineage>
        <taxon>Eukaryota</taxon>
        <taxon>Metazoa</taxon>
        <taxon>Chordata</taxon>
        <taxon>Craniata</taxon>
        <taxon>Vertebrata</taxon>
        <taxon>Euteleostomi</taxon>
        <taxon>Mammalia</taxon>
        <taxon>Eutheria</taxon>
        <taxon>Euarchontoglires</taxon>
        <taxon>Primates</taxon>
        <taxon>Haplorrhini</taxon>
        <taxon>Catarrhini</taxon>
        <taxon>Hominidae</taxon>
        <taxon>Homo</taxon>
    </lineage>
</organism>
<protein>
    <recommendedName>
        <fullName>Putative Ras-related protein Rab-1C</fullName>
        <shortName>hRab1c</shortName>
        <ecNumber evidence="1">3.6.5.2</ecNumber>
    </recommendedName>
</protein>
<name>RAB1C_HUMAN</name>